<proteinExistence type="inferred from homology"/>
<feature type="chain" id="PRO_0000303548" description="tRNA N6-adenosine threonylcarbamoyltransferase">
    <location>
        <begin position="1"/>
        <end position="341"/>
    </location>
</feature>
<feature type="binding site" evidence="1">
    <location>
        <position position="115"/>
    </location>
    <ligand>
        <name>Fe cation</name>
        <dbReference type="ChEBI" id="CHEBI:24875"/>
    </ligand>
</feature>
<feature type="binding site" evidence="1">
    <location>
        <position position="119"/>
    </location>
    <ligand>
        <name>Fe cation</name>
        <dbReference type="ChEBI" id="CHEBI:24875"/>
    </ligand>
</feature>
<feature type="binding site" evidence="1">
    <location>
        <begin position="137"/>
        <end position="141"/>
    </location>
    <ligand>
        <name>substrate</name>
    </ligand>
</feature>
<feature type="binding site" evidence="1">
    <location>
        <position position="170"/>
    </location>
    <ligand>
        <name>substrate</name>
    </ligand>
</feature>
<feature type="binding site" evidence="1">
    <location>
        <position position="183"/>
    </location>
    <ligand>
        <name>substrate</name>
    </ligand>
</feature>
<feature type="binding site" evidence="1">
    <location>
        <position position="187"/>
    </location>
    <ligand>
        <name>substrate</name>
    </ligand>
</feature>
<feature type="binding site" evidence="1">
    <location>
        <position position="276"/>
    </location>
    <ligand>
        <name>substrate</name>
    </ligand>
</feature>
<feature type="binding site" evidence="1">
    <location>
        <position position="304"/>
    </location>
    <ligand>
        <name>Fe cation</name>
        <dbReference type="ChEBI" id="CHEBI:24875"/>
    </ligand>
</feature>
<reference key="1">
    <citation type="journal article" date="2001" name="Lancet">
        <title>Whole genome sequencing of meticillin-resistant Staphylococcus aureus.</title>
        <authorList>
            <person name="Kuroda M."/>
            <person name="Ohta T."/>
            <person name="Uchiyama I."/>
            <person name="Baba T."/>
            <person name="Yuzawa H."/>
            <person name="Kobayashi I."/>
            <person name="Cui L."/>
            <person name="Oguchi A."/>
            <person name="Aoki K."/>
            <person name="Nagai Y."/>
            <person name="Lian J.-Q."/>
            <person name="Ito T."/>
            <person name="Kanamori M."/>
            <person name="Matsumaru H."/>
            <person name="Maruyama A."/>
            <person name="Murakami H."/>
            <person name="Hosoyama A."/>
            <person name="Mizutani-Ui Y."/>
            <person name="Takahashi N.K."/>
            <person name="Sawano T."/>
            <person name="Inoue R."/>
            <person name="Kaito C."/>
            <person name="Sekimizu K."/>
            <person name="Hirakawa H."/>
            <person name="Kuhara S."/>
            <person name="Goto S."/>
            <person name="Yabuzaki J."/>
            <person name="Kanehisa M."/>
            <person name="Yamashita A."/>
            <person name="Oshima K."/>
            <person name="Furuya K."/>
            <person name="Yoshino C."/>
            <person name="Shiba T."/>
            <person name="Hattori M."/>
            <person name="Ogasawara N."/>
            <person name="Hayashi H."/>
            <person name="Hiramatsu K."/>
        </authorList>
    </citation>
    <scope>NUCLEOTIDE SEQUENCE [LARGE SCALE GENOMIC DNA]</scope>
    <source>
        <strain>Mu50 / ATCC 700699</strain>
    </source>
</reference>
<comment type="function">
    <text evidence="1">Required for the formation of a threonylcarbamoyl group on adenosine at position 37 (t(6)A37) in tRNAs that read codons beginning with adenine. Is involved in the transfer of the threonylcarbamoyl moiety of threonylcarbamoyl-AMP (TC-AMP) to the N6 group of A37, together with TsaE and TsaB. TsaD likely plays a direct catalytic role in this reaction.</text>
</comment>
<comment type="catalytic activity">
    <reaction evidence="1">
        <text>L-threonylcarbamoyladenylate + adenosine(37) in tRNA = N(6)-L-threonylcarbamoyladenosine(37) in tRNA + AMP + H(+)</text>
        <dbReference type="Rhea" id="RHEA:37059"/>
        <dbReference type="Rhea" id="RHEA-COMP:10162"/>
        <dbReference type="Rhea" id="RHEA-COMP:10163"/>
        <dbReference type="ChEBI" id="CHEBI:15378"/>
        <dbReference type="ChEBI" id="CHEBI:73682"/>
        <dbReference type="ChEBI" id="CHEBI:74411"/>
        <dbReference type="ChEBI" id="CHEBI:74418"/>
        <dbReference type="ChEBI" id="CHEBI:456215"/>
        <dbReference type="EC" id="2.3.1.234"/>
    </reaction>
</comment>
<comment type="cofactor">
    <cofactor evidence="1">
        <name>Fe(2+)</name>
        <dbReference type="ChEBI" id="CHEBI:29033"/>
    </cofactor>
    <text evidence="1">Binds 1 Fe(2+) ion per subunit.</text>
</comment>
<comment type="subcellular location">
    <subcellularLocation>
        <location evidence="1">Cytoplasm</location>
    </subcellularLocation>
</comment>
<comment type="similarity">
    <text evidence="1">Belongs to the KAE1 / TsaD family.</text>
</comment>
<sequence>MTKDILILAVETSCDETSVSVIKNGRDILSNTVLSQIESHKRFGGVVPEVASRHHVEGITTTINEALVDADVSMEDIDAIAVTEGPGLIGALLIGVNAAKALAFAYDKPLIPVHHIAGHIYANHIEEPLTFPLIALIVSGGHTELVYMKDHLSFEVIGETRDDAVGEAYDKVARTIGLNYPGGPQVDRLAAEGEDTYSFPRVWLDKDSYDFSFSGLKSAVINQLHNQRQKNIPIIEANVATSFQNSVVEVLTFKAIQACKEYSVQRLIVAGGVASNKGLRQSLADQCKVNDIQLTIPSPKLCTDNAAMIGVAGHSLYQQGRFADLALNGHSNIDLEEYSAE</sequence>
<accession>Q99SK3</accession>
<keyword id="KW-0012">Acyltransferase</keyword>
<keyword id="KW-0963">Cytoplasm</keyword>
<keyword id="KW-0408">Iron</keyword>
<keyword id="KW-0479">Metal-binding</keyword>
<keyword id="KW-0808">Transferase</keyword>
<keyword id="KW-0819">tRNA processing</keyword>
<protein>
    <recommendedName>
        <fullName evidence="1">tRNA N6-adenosine threonylcarbamoyltransferase</fullName>
        <ecNumber evidence="1">2.3.1.234</ecNumber>
    </recommendedName>
    <alternativeName>
        <fullName evidence="1">N6-L-threonylcarbamoyladenine synthase</fullName>
        <shortName evidence="1">t(6)A synthase</shortName>
    </alternativeName>
    <alternativeName>
        <fullName evidence="1">t(6)A37 threonylcarbamoyladenosine biosynthesis protein TsaD</fullName>
    </alternativeName>
    <alternativeName>
        <fullName evidence="1">tRNA threonylcarbamoyladenosine biosynthesis protein TsaD</fullName>
    </alternativeName>
</protein>
<name>TSAD_STAAM</name>
<evidence type="ECO:0000255" key="1">
    <source>
        <dbReference type="HAMAP-Rule" id="MF_01445"/>
    </source>
</evidence>
<organism>
    <name type="scientific">Staphylococcus aureus (strain Mu50 / ATCC 700699)</name>
    <dbReference type="NCBI Taxonomy" id="158878"/>
    <lineage>
        <taxon>Bacteria</taxon>
        <taxon>Bacillati</taxon>
        <taxon>Bacillota</taxon>
        <taxon>Bacilli</taxon>
        <taxon>Bacillales</taxon>
        <taxon>Staphylococcaceae</taxon>
        <taxon>Staphylococcus</taxon>
    </lineage>
</organism>
<gene>
    <name evidence="1" type="primary">tsaD</name>
    <name type="synonym">gcp</name>
    <name type="ordered locus">SAV2049</name>
</gene>
<dbReference type="EC" id="2.3.1.234" evidence="1"/>
<dbReference type="EMBL" id="BA000017">
    <property type="protein sequence ID" value="BAB58211.1"/>
    <property type="molecule type" value="Genomic_DNA"/>
</dbReference>
<dbReference type="RefSeq" id="WP_000159041.1">
    <property type="nucleotide sequence ID" value="NC_002758.2"/>
</dbReference>
<dbReference type="SMR" id="Q99SK3"/>
<dbReference type="DNASU" id="1122061"/>
<dbReference type="KEGG" id="sav:SAV2049"/>
<dbReference type="HOGENOM" id="CLU_023208_0_2_9"/>
<dbReference type="PhylomeDB" id="Q99SK3"/>
<dbReference type="Proteomes" id="UP000002481">
    <property type="component" value="Chromosome"/>
</dbReference>
<dbReference type="GO" id="GO:0005737">
    <property type="term" value="C:cytoplasm"/>
    <property type="evidence" value="ECO:0007669"/>
    <property type="project" value="UniProtKB-SubCell"/>
</dbReference>
<dbReference type="GO" id="GO:0005506">
    <property type="term" value="F:iron ion binding"/>
    <property type="evidence" value="ECO:0007669"/>
    <property type="project" value="UniProtKB-UniRule"/>
</dbReference>
<dbReference type="GO" id="GO:0061711">
    <property type="term" value="F:N(6)-L-threonylcarbamoyladenine synthase activity"/>
    <property type="evidence" value="ECO:0007669"/>
    <property type="project" value="UniProtKB-EC"/>
</dbReference>
<dbReference type="GO" id="GO:0002949">
    <property type="term" value="P:tRNA threonylcarbamoyladenosine modification"/>
    <property type="evidence" value="ECO:0007669"/>
    <property type="project" value="UniProtKB-UniRule"/>
</dbReference>
<dbReference type="CDD" id="cd24133">
    <property type="entry name" value="ASKHA_NBD_TsaD_bac"/>
    <property type="match status" value="1"/>
</dbReference>
<dbReference type="FunFam" id="3.30.420.40:FF:000012">
    <property type="entry name" value="tRNA N6-adenosine threonylcarbamoyltransferase"/>
    <property type="match status" value="1"/>
</dbReference>
<dbReference type="FunFam" id="3.30.420.40:FF:000040">
    <property type="entry name" value="tRNA N6-adenosine threonylcarbamoyltransferase"/>
    <property type="match status" value="1"/>
</dbReference>
<dbReference type="Gene3D" id="3.30.420.40">
    <property type="match status" value="2"/>
</dbReference>
<dbReference type="HAMAP" id="MF_01445">
    <property type="entry name" value="TsaD"/>
    <property type="match status" value="1"/>
</dbReference>
<dbReference type="InterPro" id="IPR043129">
    <property type="entry name" value="ATPase_NBD"/>
</dbReference>
<dbReference type="InterPro" id="IPR000905">
    <property type="entry name" value="Gcp-like_dom"/>
</dbReference>
<dbReference type="InterPro" id="IPR017861">
    <property type="entry name" value="KAE1/TsaD"/>
</dbReference>
<dbReference type="InterPro" id="IPR017860">
    <property type="entry name" value="Peptidase_M22_CS"/>
</dbReference>
<dbReference type="InterPro" id="IPR022450">
    <property type="entry name" value="TsaD"/>
</dbReference>
<dbReference type="NCBIfam" id="TIGR00329">
    <property type="entry name" value="gcp_kae1"/>
    <property type="match status" value="1"/>
</dbReference>
<dbReference type="NCBIfam" id="TIGR03723">
    <property type="entry name" value="T6A_TsaD_YgjD"/>
    <property type="match status" value="1"/>
</dbReference>
<dbReference type="PANTHER" id="PTHR11735">
    <property type="entry name" value="TRNA N6-ADENOSINE THREONYLCARBAMOYLTRANSFERASE"/>
    <property type="match status" value="1"/>
</dbReference>
<dbReference type="PANTHER" id="PTHR11735:SF6">
    <property type="entry name" value="TRNA N6-ADENOSINE THREONYLCARBAMOYLTRANSFERASE, MITOCHONDRIAL"/>
    <property type="match status" value="1"/>
</dbReference>
<dbReference type="Pfam" id="PF00814">
    <property type="entry name" value="TsaD"/>
    <property type="match status" value="1"/>
</dbReference>
<dbReference type="PRINTS" id="PR00789">
    <property type="entry name" value="OSIALOPTASE"/>
</dbReference>
<dbReference type="SUPFAM" id="SSF53067">
    <property type="entry name" value="Actin-like ATPase domain"/>
    <property type="match status" value="2"/>
</dbReference>
<dbReference type="PROSITE" id="PS01016">
    <property type="entry name" value="GLYCOPROTEASE"/>
    <property type="match status" value="1"/>
</dbReference>